<evidence type="ECO:0000255" key="1">
    <source>
        <dbReference type="HAMAP-Rule" id="MF_00652"/>
    </source>
</evidence>
<proteinExistence type="inferred from homology"/>
<dbReference type="EMBL" id="BA000031">
    <property type="protein sequence ID" value="BAC58767.1"/>
    <property type="molecule type" value="Genomic_DNA"/>
</dbReference>
<dbReference type="RefSeq" id="NP_796883.1">
    <property type="nucleotide sequence ID" value="NC_004603.1"/>
</dbReference>
<dbReference type="SMR" id="Q87SC0"/>
<dbReference type="GeneID" id="1187972"/>
<dbReference type="KEGG" id="vpa:VP0504"/>
<dbReference type="PATRIC" id="fig|223926.6.peg.480"/>
<dbReference type="eggNOG" id="COG3022">
    <property type="taxonomic scope" value="Bacteria"/>
</dbReference>
<dbReference type="HOGENOM" id="CLU_061989_0_0_6"/>
<dbReference type="Proteomes" id="UP000002493">
    <property type="component" value="Chromosome 1"/>
</dbReference>
<dbReference type="GO" id="GO:0005829">
    <property type="term" value="C:cytosol"/>
    <property type="evidence" value="ECO:0007669"/>
    <property type="project" value="TreeGrafter"/>
</dbReference>
<dbReference type="GO" id="GO:0033194">
    <property type="term" value="P:response to hydroperoxide"/>
    <property type="evidence" value="ECO:0007669"/>
    <property type="project" value="TreeGrafter"/>
</dbReference>
<dbReference type="HAMAP" id="MF_00652">
    <property type="entry name" value="UPF0246"/>
    <property type="match status" value="1"/>
</dbReference>
<dbReference type="InterPro" id="IPR005583">
    <property type="entry name" value="YaaA"/>
</dbReference>
<dbReference type="NCBIfam" id="NF002541">
    <property type="entry name" value="PRK02101.1-1"/>
    <property type="match status" value="1"/>
</dbReference>
<dbReference type="NCBIfam" id="NF002542">
    <property type="entry name" value="PRK02101.1-3"/>
    <property type="match status" value="1"/>
</dbReference>
<dbReference type="PANTHER" id="PTHR30283:SF4">
    <property type="entry name" value="PEROXIDE STRESS RESISTANCE PROTEIN YAAA"/>
    <property type="match status" value="1"/>
</dbReference>
<dbReference type="PANTHER" id="PTHR30283">
    <property type="entry name" value="PEROXIDE STRESS RESPONSE PROTEIN YAAA"/>
    <property type="match status" value="1"/>
</dbReference>
<dbReference type="Pfam" id="PF03883">
    <property type="entry name" value="H2O2_YaaD"/>
    <property type="match status" value="1"/>
</dbReference>
<gene>
    <name type="ordered locus">VP0504</name>
</gene>
<sequence length="258" mass="29341">MLIVVSPAKTLDYESPLATEKFTQPELIEYSKELIDVCRKLTPADVASLMKVSDKIADLNVGRFQEWSETFTTENSRQAILAFKGDVYTGLEAETLSDADFEYAQKHLRMLSGLYGLLKPLDLMQPYRLEMGTKLANDKGSNLYQFWGNVITDKLNEAIAEQGDNVLINLASNEYFKAVKPKNLDAQVITPIFKDCKNGQYKVISFYAKKARGMMARYIIENRIESVADLTKFDTAGYYFVEEESTPTDLVFKREEQN</sequence>
<comment type="similarity">
    <text evidence="1">Belongs to the UPF0246 family.</text>
</comment>
<organism>
    <name type="scientific">Vibrio parahaemolyticus serotype O3:K6 (strain RIMD 2210633)</name>
    <dbReference type="NCBI Taxonomy" id="223926"/>
    <lineage>
        <taxon>Bacteria</taxon>
        <taxon>Pseudomonadati</taxon>
        <taxon>Pseudomonadota</taxon>
        <taxon>Gammaproteobacteria</taxon>
        <taxon>Vibrionales</taxon>
        <taxon>Vibrionaceae</taxon>
        <taxon>Vibrio</taxon>
    </lineage>
</organism>
<feature type="chain" id="PRO_0000204016" description="UPF0246 protein VP0504">
    <location>
        <begin position="1"/>
        <end position="258"/>
    </location>
</feature>
<accession>Q87SC0</accession>
<protein>
    <recommendedName>
        <fullName evidence="1">UPF0246 protein VP0504</fullName>
    </recommendedName>
</protein>
<name>Y504_VIBPA</name>
<reference key="1">
    <citation type="journal article" date="2003" name="Lancet">
        <title>Genome sequence of Vibrio parahaemolyticus: a pathogenic mechanism distinct from that of V. cholerae.</title>
        <authorList>
            <person name="Makino K."/>
            <person name="Oshima K."/>
            <person name="Kurokawa K."/>
            <person name="Yokoyama K."/>
            <person name="Uda T."/>
            <person name="Tagomori K."/>
            <person name="Iijima Y."/>
            <person name="Najima M."/>
            <person name="Nakano M."/>
            <person name="Yamashita A."/>
            <person name="Kubota Y."/>
            <person name="Kimura S."/>
            <person name="Yasunaga T."/>
            <person name="Honda T."/>
            <person name="Shinagawa H."/>
            <person name="Hattori M."/>
            <person name="Iida T."/>
        </authorList>
    </citation>
    <scope>NUCLEOTIDE SEQUENCE [LARGE SCALE GENOMIC DNA]</scope>
    <source>
        <strain>RIMD 2210633</strain>
    </source>
</reference>